<comment type="function">
    <text evidence="1">Small subunit of the glutamine-dependent carbamoyl phosphate synthetase (CPSase). CPSase catalyzes the formation of carbamoyl phosphate from the ammonia moiety of glutamine, carbonate, and phosphate donated by ATP, constituting the first step of 2 biosynthetic pathways, one leading to arginine and/or urea and the other to pyrimidine nucleotides. The small subunit (glutamine amidotransferase) binds and cleaves glutamine to supply the large subunit with the substrate ammonia.</text>
</comment>
<comment type="catalytic activity">
    <reaction evidence="1">
        <text>hydrogencarbonate + L-glutamine + 2 ATP + H2O = carbamoyl phosphate + L-glutamate + 2 ADP + phosphate + 2 H(+)</text>
        <dbReference type="Rhea" id="RHEA:18633"/>
        <dbReference type="ChEBI" id="CHEBI:15377"/>
        <dbReference type="ChEBI" id="CHEBI:15378"/>
        <dbReference type="ChEBI" id="CHEBI:17544"/>
        <dbReference type="ChEBI" id="CHEBI:29985"/>
        <dbReference type="ChEBI" id="CHEBI:30616"/>
        <dbReference type="ChEBI" id="CHEBI:43474"/>
        <dbReference type="ChEBI" id="CHEBI:58228"/>
        <dbReference type="ChEBI" id="CHEBI:58359"/>
        <dbReference type="ChEBI" id="CHEBI:456216"/>
        <dbReference type="EC" id="6.3.5.5"/>
    </reaction>
</comment>
<comment type="catalytic activity">
    <molecule>Carbamoyl phosphate synthase small chain</molecule>
    <reaction evidence="1">
        <text>L-glutamine + H2O = L-glutamate + NH4(+)</text>
        <dbReference type="Rhea" id="RHEA:15889"/>
        <dbReference type="ChEBI" id="CHEBI:15377"/>
        <dbReference type="ChEBI" id="CHEBI:28938"/>
        <dbReference type="ChEBI" id="CHEBI:29985"/>
        <dbReference type="ChEBI" id="CHEBI:58359"/>
    </reaction>
</comment>
<comment type="pathway">
    <text evidence="1">Amino-acid biosynthesis; L-arginine biosynthesis; carbamoyl phosphate from bicarbonate: step 1/1.</text>
</comment>
<comment type="pathway">
    <text evidence="1">Pyrimidine metabolism; UMP biosynthesis via de novo pathway; (S)-dihydroorotate from bicarbonate: step 1/3.</text>
</comment>
<comment type="subunit">
    <text evidence="1">Composed of two chains; the small (or glutamine) chain promotes the hydrolysis of glutamine to ammonia, which is used by the large (or ammonia) chain to synthesize carbamoyl phosphate. Tetramer of heterodimers (alpha,beta)4.</text>
</comment>
<comment type="similarity">
    <text evidence="1">Belongs to the CarA family.</text>
</comment>
<proteinExistence type="inferred from homology"/>
<protein>
    <recommendedName>
        <fullName evidence="1">Carbamoyl phosphate synthase small chain</fullName>
        <ecNumber evidence="1">6.3.5.5</ecNumber>
    </recommendedName>
    <alternativeName>
        <fullName evidence="1">Carbamoyl phosphate synthetase glutamine chain</fullName>
    </alternativeName>
</protein>
<reference key="1">
    <citation type="journal article" date="2003" name="Genome Res.">
        <title>Comparative complete genome sequence analysis of the amino acid replacements responsible for the thermostability of Corynebacterium efficiens.</title>
        <authorList>
            <person name="Nishio Y."/>
            <person name="Nakamura Y."/>
            <person name="Kawarabayasi Y."/>
            <person name="Usuda Y."/>
            <person name="Kimura E."/>
            <person name="Sugimoto S."/>
            <person name="Matsui K."/>
            <person name="Yamagishi A."/>
            <person name="Kikuchi H."/>
            <person name="Ikeo K."/>
            <person name="Gojobori T."/>
        </authorList>
    </citation>
    <scope>NUCLEOTIDE SEQUENCE [LARGE SCALE GENOMIC DNA]</scope>
    <source>
        <strain>DSM 44549 / YS-314 / AJ 12310 / JCM 11189 / NBRC 100395</strain>
    </source>
</reference>
<sequence length="400" mass="42885">MSNETNANSTDSRQGVTNIGSVPAYLVLADGRTFKGFGFGAIGTTLGEAVFTTAMTGYQETMTDPSYHRQIVVATAPQIGNTGWNEEDNESHDGSIWVAGLVIRDLAVRVSNWRATTTLQEEMAKQGVVGIGGIDTRALVRHIRNEGAVPAGIFSGADAERPIEELVEIVKSQPSMVGANLAVEVSVDKPYVIEAEGEARHTVVAYDLGIKQNTPRRFAARGVRTVIVPAETPFEEIKQYNPSGVFISNGPGDPAAADIMVNIVREVLAADIPFFGICFGNQILGRAFGMETYKLKFGHRGINVPVKNHITGKIDITAQNHGFALKGEAGQEFETDFGTAVVTHTCLNDGVVEGVALKSGRAYSVQYHPEAAAGPNDASPLFDQFVALMDEDSENQKEEA</sequence>
<organism>
    <name type="scientific">Corynebacterium efficiens (strain DSM 44549 / YS-314 / AJ 12310 / JCM 11189 / NBRC 100395)</name>
    <dbReference type="NCBI Taxonomy" id="196164"/>
    <lineage>
        <taxon>Bacteria</taxon>
        <taxon>Bacillati</taxon>
        <taxon>Actinomycetota</taxon>
        <taxon>Actinomycetes</taxon>
        <taxon>Mycobacteriales</taxon>
        <taxon>Corynebacteriaceae</taxon>
        <taxon>Corynebacterium</taxon>
    </lineage>
</organism>
<gene>
    <name evidence="1" type="primary">carA</name>
    <name type="ordered locus">CE1730</name>
</gene>
<name>CARA_COREF</name>
<dbReference type="EC" id="6.3.5.5" evidence="1"/>
<dbReference type="EMBL" id="BA000035">
    <property type="protein sequence ID" value="BAC18540.1"/>
    <property type="molecule type" value="Genomic_DNA"/>
</dbReference>
<dbReference type="RefSeq" id="WP_006767730.1">
    <property type="nucleotide sequence ID" value="NC_004369.1"/>
</dbReference>
<dbReference type="SMR" id="Q8FT41"/>
<dbReference type="STRING" id="196164.gene:10742151"/>
<dbReference type="KEGG" id="cef:CE1730"/>
<dbReference type="eggNOG" id="COG0505">
    <property type="taxonomic scope" value="Bacteria"/>
</dbReference>
<dbReference type="HOGENOM" id="CLU_035901_2_1_11"/>
<dbReference type="OrthoDB" id="9804328at2"/>
<dbReference type="UniPathway" id="UPA00068">
    <property type="reaction ID" value="UER00171"/>
</dbReference>
<dbReference type="UniPathway" id="UPA00070">
    <property type="reaction ID" value="UER00115"/>
</dbReference>
<dbReference type="Proteomes" id="UP000001409">
    <property type="component" value="Chromosome"/>
</dbReference>
<dbReference type="GO" id="GO:0005524">
    <property type="term" value="F:ATP binding"/>
    <property type="evidence" value="ECO:0007669"/>
    <property type="project" value="UniProtKB-UniRule"/>
</dbReference>
<dbReference type="GO" id="GO:0004088">
    <property type="term" value="F:carbamoyl-phosphate synthase (glutamine-hydrolyzing) activity"/>
    <property type="evidence" value="ECO:0007669"/>
    <property type="project" value="UniProtKB-UniRule"/>
</dbReference>
<dbReference type="GO" id="GO:0004359">
    <property type="term" value="F:glutaminase activity"/>
    <property type="evidence" value="ECO:0007669"/>
    <property type="project" value="RHEA"/>
</dbReference>
<dbReference type="GO" id="GO:0006207">
    <property type="term" value="P:'de novo' pyrimidine nucleobase biosynthetic process"/>
    <property type="evidence" value="ECO:0007669"/>
    <property type="project" value="InterPro"/>
</dbReference>
<dbReference type="GO" id="GO:0044205">
    <property type="term" value="P:'de novo' UMP biosynthetic process"/>
    <property type="evidence" value="ECO:0007669"/>
    <property type="project" value="UniProtKB-UniRule"/>
</dbReference>
<dbReference type="GO" id="GO:0006541">
    <property type="term" value="P:glutamine metabolic process"/>
    <property type="evidence" value="ECO:0007669"/>
    <property type="project" value="InterPro"/>
</dbReference>
<dbReference type="GO" id="GO:0006526">
    <property type="term" value="P:L-arginine biosynthetic process"/>
    <property type="evidence" value="ECO:0007669"/>
    <property type="project" value="UniProtKB-UniRule"/>
</dbReference>
<dbReference type="CDD" id="cd01744">
    <property type="entry name" value="GATase1_CPSase"/>
    <property type="match status" value="1"/>
</dbReference>
<dbReference type="FunFam" id="3.50.30.20:FF:000001">
    <property type="entry name" value="Carbamoyl-phosphate synthase small chain"/>
    <property type="match status" value="1"/>
</dbReference>
<dbReference type="Gene3D" id="3.40.50.880">
    <property type="match status" value="1"/>
</dbReference>
<dbReference type="Gene3D" id="3.50.30.20">
    <property type="entry name" value="Carbamoyl-phosphate synthase small subunit, N-terminal domain"/>
    <property type="match status" value="1"/>
</dbReference>
<dbReference type="HAMAP" id="MF_01209">
    <property type="entry name" value="CPSase_S_chain"/>
    <property type="match status" value="1"/>
</dbReference>
<dbReference type="InterPro" id="IPR050472">
    <property type="entry name" value="Anth_synth/Amidotransfase"/>
</dbReference>
<dbReference type="InterPro" id="IPR006274">
    <property type="entry name" value="CarbamoylP_synth_ssu"/>
</dbReference>
<dbReference type="InterPro" id="IPR002474">
    <property type="entry name" value="CarbamoylP_synth_ssu_N"/>
</dbReference>
<dbReference type="InterPro" id="IPR036480">
    <property type="entry name" value="CarbP_synth_ssu_N_sf"/>
</dbReference>
<dbReference type="InterPro" id="IPR029062">
    <property type="entry name" value="Class_I_gatase-like"/>
</dbReference>
<dbReference type="InterPro" id="IPR035686">
    <property type="entry name" value="CPSase_GATase1"/>
</dbReference>
<dbReference type="InterPro" id="IPR017926">
    <property type="entry name" value="GATASE"/>
</dbReference>
<dbReference type="NCBIfam" id="TIGR01368">
    <property type="entry name" value="CPSaseIIsmall"/>
    <property type="match status" value="1"/>
</dbReference>
<dbReference type="NCBIfam" id="NF009475">
    <property type="entry name" value="PRK12838.1"/>
    <property type="match status" value="1"/>
</dbReference>
<dbReference type="PANTHER" id="PTHR43418:SF7">
    <property type="entry name" value="CARBAMOYL-PHOSPHATE SYNTHASE SMALL CHAIN"/>
    <property type="match status" value="1"/>
</dbReference>
<dbReference type="PANTHER" id="PTHR43418">
    <property type="entry name" value="MULTIFUNCTIONAL TRYPTOPHAN BIOSYNTHESIS PROTEIN-RELATED"/>
    <property type="match status" value="1"/>
</dbReference>
<dbReference type="Pfam" id="PF00988">
    <property type="entry name" value="CPSase_sm_chain"/>
    <property type="match status" value="1"/>
</dbReference>
<dbReference type="Pfam" id="PF00117">
    <property type="entry name" value="GATase"/>
    <property type="match status" value="1"/>
</dbReference>
<dbReference type="PRINTS" id="PR00097">
    <property type="entry name" value="ANTSNTHASEII"/>
</dbReference>
<dbReference type="PRINTS" id="PR00099">
    <property type="entry name" value="CPSGATASE"/>
</dbReference>
<dbReference type="PRINTS" id="PR00096">
    <property type="entry name" value="GATASE"/>
</dbReference>
<dbReference type="SMART" id="SM01097">
    <property type="entry name" value="CPSase_sm_chain"/>
    <property type="match status" value="1"/>
</dbReference>
<dbReference type="SUPFAM" id="SSF52021">
    <property type="entry name" value="Carbamoyl phosphate synthetase, small subunit N-terminal domain"/>
    <property type="match status" value="1"/>
</dbReference>
<dbReference type="SUPFAM" id="SSF52317">
    <property type="entry name" value="Class I glutamine amidotransferase-like"/>
    <property type="match status" value="1"/>
</dbReference>
<dbReference type="PROSITE" id="PS51273">
    <property type="entry name" value="GATASE_TYPE_1"/>
    <property type="match status" value="1"/>
</dbReference>
<feature type="chain" id="PRO_0000112270" description="Carbamoyl phosphate synthase small chain">
    <location>
        <begin position="1"/>
        <end position="400"/>
    </location>
</feature>
<feature type="domain" description="Glutamine amidotransferase type-1" evidence="1">
    <location>
        <begin position="200"/>
        <end position="395"/>
    </location>
</feature>
<feature type="region of interest" description="CPSase" evidence="1">
    <location>
        <begin position="1"/>
        <end position="199"/>
    </location>
</feature>
<feature type="active site" description="Nucleophile" evidence="1">
    <location>
        <position position="278"/>
    </location>
</feature>
<feature type="active site" evidence="1">
    <location>
        <position position="368"/>
    </location>
</feature>
<feature type="active site" evidence="1">
    <location>
        <position position="370"/>
    </location>
</feature>
<feature type="binding site" evidence="1">
    <location>
        <position position="66"/>
    </location>
    <ligand>
        <name>L-glutamine</name>
        <dbReference type="ChEBI" id="CHEBI:58359"/>
    </ligand>
</feature>
<feature type="binding site" evidence="1">
    <location>
        <position position="250"/>
    </location>
    <ligand>
        <name>L-glutamine</name>
        <dbReference type="ChEBI" id="CHEBI:58359"/>
    </ligand>
</feature>
<feature type="binding site" evidence="1">
    <location>
        <position position="252"/>
    </location>
    <ligand>
        <name>L-glutamine</name>
        <dbReference type="ChEBI" id="CHEBI:58359"/>
    </ligand>
</feature>
<feature type="binding site" evidence="1">
    <location>
        <position position="279"/>
    </location>
    <ligand>
        <name>L-glutamine</name>
        <dbReference type="ChEBI" id="CHEBI:58359"/>
    </ligand>
</feature>
<feature type="binding site" evidence="1">
    <location>
        <position position="282"/>
    </location>
    <ligand>
        <name>L-glutamine</name>
        <dbReference type="ChEBI" id="CHEBI:58359"/>
    </ligand>
</feature>
<feature type="binding site" evidence="1">
    <location>
        <position position="320"/>
    </location>
    <ligand>
        <name>L-glutamine</name>
        <dbReference type="ChEBI" id="CHEBI:58359"/>
    </ligand>
</feature>
<feature type="binding site" evidence="1">
    <location>
        <position position="322"/>
    </location>
    <ligand>
        <name>L-glutamine</name>
        <dbReference type="ChEBI" id="CHEBI:58359"/>
    </ligand>
</feature>
<feature type="binding site" evidence="1">
    <location>
        <position position="323"/>
    </location>
    <ligand>
        <name>L-glutamine</name>
        <dbReference type="ChEBI" id="CHEBI:58359"/>
    </ligand>
</feature>
<accession>Q8FT41</accession>
<keyword id="KW-0028">Amino-acid biosynthesis</keyword>
<keyword id="KW-0055">Arginine biosynthesis</keyword>
<keyword id="KW-0067">ATP-binding</keyword>
<keyword id="KW-0315">Glutamine amidotransferase</keyword>
<keyword id="KW-0436">Ligase</keyword>
<keyword id="KW-0547">Nucleotide-binding</keyword>
<keyword id="KW-0665">Pyrimidine biosynthesis</keyword>
<keyword id="KW-1185">Reference proteome</keyword>
<evidence type="ECO:0000255" key="1">
    <source>
        <dbReference type="HAMAP-Rule" id="MF_01209"/>
    </source>
</evidence>